<sequence>MWLGEYTWLNVFGIFLQATFIQNILLSNFLGMCSYLACSARVSTANGLGMSVALVLTVTGSINWVVHTFITGPKALTWISPSLANVNLNFLELIIFIVVIAAFTQILELLLEKVSRNLYLSLGIFLPLIAVNCAILGGVLFGITRNYPFIPMMIFSLGAGCGWWLAIVLFATIKEKLAYSDIPKNLQGMGISFITTGLIAMAFMSLTGIDISKPSAAAPTSDILETPNASSITTTNLKPVKKVRIAQQRAAKEKAINIKRGKTQ</sequence>
<organism>
    <name type="scientific">Chlamydia caviae (strain ATCC VR-813 / DSM 19441 / 03DC25 / GPIC)</name>
    <name type="common">Chlamydophila caviae</name>
    <dbReference type="NCBI Taxonomy" id="227941"/>
    <lineage>
        <taxon>Bacteria</taxon>
        <taxon>Pseudomonadati</taxon>
        <taxon>Chlamydiota</taxon>
        <taxon>Chlamydiia</taxon>
        <taxon>Chlamydiales</taxon>
        <taxon>Chlamydiaceae</taxon>
        <taxon>Chlamydia/Chlamydophila group</taxon>
        <taxon>Chlamydia</taxon>
    </lineage>
</organism>
<dbReference type="EC" id="7.2.1.1" evidence="1"/>
<dbReference type="EMBL" id="AE015925">
    <property type="protein sequence ID" value="AAP05110.1"/>
    <property type="molecule type" value="Genomic_DNA"/>
</dbReference>
<dbReference type="RefSeq" id="WP_011006327.1">
    <property type="nucleotide sequence ID" value="NC_003361.3"/>
</dbReference>
<dbReference type="SMR" id="Q823P5"/>
<dbReference type="STRING" id="227941.CCA_00362"/>
<dbReference type="KEGG" id="cca:CCA_00362"/>
<dbReference type="eggNOG" id="COG2209">
    <property type="taxonomic scope" value="Bacteria"/>
</dbReference>
<dbReference type="HOGENOM" id="CLU_095255_0_0_0"/>
<dbReference type="OrthoDB" id="9803631at2"/>
<dbReference type="Proteomes" id="UP000002193">
    <property type="component" value="Chromosome"/>
</dbReference>
<dbReference type="GO" id="GO:0009276">
    <property type="term" value="C:Gram-negative-bacterium-type cell wall"/>
    <property type="evidence" value="ECO:0007669"/>
    <property type="project" value="InterPro"/>
</dbReference>
<dbReference type="GO" id="GO:0005886">
    <property type="term" value="C:plasma membrane"/>
    <property type="evidence" value="ECO:0007669"/>
    <property type="project" value="UniProtKB-SubCell"/>
</dbReference>
<dbReference type="GO" id="GO:0016655">
    <property type="term" value="F:oxidoreductase activity, acting on NAD(P)H, quinone or similar compound as acceptor"/>
    <property type="evidence" value="ECO:0007669"/>
    <property type="project" value="UniProtKB-UniRule"/>
</dbReference>
<dbReference type="GO" id="GO:0022904">
    <property type="term" value="P:respiratory electron transport chain"/>
    <property type="evidence" value="ECO:0007669"/>
    <property type="project" value="InterPro"/>
</dbReference>
<dbReference type="GO" id="GO:0006814">
    <property type="term" value="P:sodium ion transport"/>
    <property type="evidence" value="ECO:0007669"/>
    <property type="project" value="UniProtKB-UniRule"/>
</dbReference>
<dbReference type="HAMAP" id="MF_00429">
    <property type="entry name" value="NqrE"/>
    <property type="match status" value="1"/>
</dbReference>
<dbReference type="InterPro" id="IPR003667">
    <property type="entry name" value="NqrDE/RnfAE"/>
</dbReference>
<dbReference type="InterPro" id="IPR050133">
    <property type="entry name" value="NqrDE/RnfAE_oxidrdctase"/>
</dbReference>
<dbReference type="InterPro" id="IPR010967">
    <property type="entry name" value="NqrE"/>
</dbReference>
<dbReference type="NCBIfam" id="TIGR01940">
    <property type="entry name" value="nqrE"/>
    <property type="match status" value="1"/>
</dbReference>
<dbReference type="NCBIfam" id="NF002200">
    <property type="entry name" value="PRK01061.1"/>
    <property type="match status" value="1"/>
</dbReference>
<dbReference type="PANTHER" id="PTHR30335">
    <property type="entry name" value="INTEGRAL MEMBRANE PROTEIN OF SOXR-REDUCING COMPLEX"/>
    <property type="match status" value="1"/>
</dbReference>
<dbReference type="PANTHER" id="PTHR30335:SF1">
    <property type="entry name" value="NA(+)-TRANSLOCATING NADH-QUINONE REDUCTASE SUBUNIT E"/>
    <property type="match status" value="1"/>
</dbReference>
<dbReference type="Pfam" id="PF02508">
    <property type="entry name" value="Rnf-Nqr"/>
    <property type="match status" value="1"/>
</dbReference>
<gene>
    <name evidence="1" type="primary">nqrE</name>
    <name type="ordered locus">CCA_00362</name>
</gene>
<name>NQRE_CHLCV</name>
<keyword id="KW-0997">Cell inner membrane</keyword>
<keyword id="KW-1003">Cell membrane</keyword>
<keyword id="KW-0406">Ion transport</keyword>
<keyword id="KW-0472">Membrane</keyword>
<keyword id="KW-0520">NAD</keyword>
<keyword id="KW-0915">Sodium</keyword>
<keyword id="KW-0739">Sodium transport</keyword>
<keyword id="KW-1278">Translocase</keyword>
<keyword id="KW-0812">Transmembrane</keyword>
<keyword id="KW-1133">Transmembrane helix</keyword>
<keyword id="KW-0813">Transport</keyword>
<keyword id="KW-0830">Ubiquinone</keyword>
<proteinExistence type="inferred from homology"/>
<evidence type="ECO:0000255" key="1">
    <source>
        <dbReference type="HAMAP-Rule" id="MF_00429"/>
    </source>
</evidence>
<comment type="function">
    <text evidence="1">NQR complex catalyzes the reduction of ubiquinone-1 to ubiquinol by two successive reactions, coupled with the transport of Na(+) ions from the cytoplasm to the periplasm. NqrA to NqrE are probably involved in the second step, the conversion of ubisemiquinone to ubiquinol.</text>
</comment>
<comment type="catalytic activity">
    <reaction evidence="1">
        <text>a ubiquinone + n Na(+)(in) + NADH + H(+) = a ubiquinol + n Na(+)(out) + NAD(+)</text>
        <dbReference type="Rhea" id="RHEA:47748"/>
        <dbReference type="Rhea" id="RHEA-COMP:9565"/>
        <dbReference type="Rhea" id="RHEA-COMP:9566"/>
        <dbReference type="ChEBI" id="CHEBI:15378"/>
        <dbReference type="ChEBI" id="CHEBI:16389"/>
        <dbReference type="ChEBI" id="CHEBI:17976"/>
        <dbReference type="ChEBI" id="CHEBI:29101"/>
        <dbReference type="ChEBI" id="CHEBI:57540"/>
        <dbReference type="ChEBI" id="CHEBI:57945"/>
        <dbReference type="EC" id="7.2.1.1"/>
    </reaction>
</comment>
<comment type="subunit">
    <text evidence="1">Composed of six subunits; NqrA, NqrB, NqrC, NqrD, NqrE and NqrF.</text>
</comment>
<comment type="subcellular location">
    <subcellularLocation>
        <location evidence="1">Cell inner membrane</location>
        <topology evidence="1">Multi-pass membrane protein</topology>
    </subcellularLocation>
</comment>
<comment type="similarity">
    <text evidence="1">Belongs to the NqrDE/RnfAE family.</text>
</comment>
<accession>Q823P5</accession>
<protein>
    <recommendedName>
        <fullName evidence="1">Na(+)-translocating NADH-quinone reductase subunit E</fullName>
        <shortName evidence="1">Na(+)-NQR subunit E</shortName>
        <shortName evidence="1">Na(+)-translocating NQR subunit E</shortName>
        <ecNumber evidence="1">7.2.1.1</ecNumber>
    </recommendedName>
    <alternativeName>
        <fullName evidence="1">NQR complex subunit E</fullName>
    </alternativeName>
    <alternativeName>
        <fullName evidence="1">NQR-1 subunit E</fullName>
    </alternativeName>
</protein>
<reference key="1">
    <citation type="journal article" date="2003" name="Nucleic Acids Res.">
        <title>Genome sequence of Chlamydophila caviae (Chlamydia psittaci GPIC): examining the role of niche-specific genes in the evolution of the Chlamydiaceae.</title>
        <authorList>
            <person name="Read T.D."/>
            <person name="Myers G.S.A."/>
            <person name="Brunham R.C."/>
            <person name="Nelson W.C."/>
            <person name="Paulsen I.T."/>
            <person name="Heidelberg J.F."/>
            <person name="Holtzapple E.K."/>
            <person name="Khouri H.M."/>
            <person name="Federova N.B."/>
            <person name="Carty H.A."/>
            <person name="Umayam L.A."/>
            <person name="Haft D.H."/>
            <person name="Peterson J.D."/>
            <person name="Beanan M.J."/>
            <person name="White O."/>
            <person name="Salzberg S.L."/>
            <person name="Hsia R.-C."/>
            <person name="McClarty G."/>
            <person name="Rank R.G."/>
            <person name="Bavoil P.M."/>
            <person name="Fraser C.M."/>
        </authorList>
    </citation>
    <scope>NUCLEOTIDE SEQUENCE [LARGE SCALE GENOMIC DNA]</scope>
    <source>
        <strain>ATCC VR-813 / DSM 19441 / 03DC25 / GPIC</strain>
    </source>
</reference>
<feature type="chain" id="PRO_0000214247" description="Na(+)-translocating NADH-quinone reductase subunit E">
    <location>
        <begin position="1"/>
        <end position="264"/>
    </location>
</feature>
<feature type="transmembrane region" description="Helical" evidence="1">
    <location>
        <begin position="11"/>
        <end position="31"/>
    </location>
</feature>
<feature type="transmembrane region" description="Helical" evidence="1">
    <location>
        <begin position="50"/>
        <end position="70"/>
    </location>
</feature>
<feature type="transmembrane region" description="Helical" evidence="1">
    <location>
        <begin position="90"/>
        <end position="110"/>
    </location>
</feature>
<feature type="transmembrane region" description="Helical" evidence="1">
    <location>
        <begin position="123"/>
        <end position="143"/>
    </location>
</feature>
<feature type="transmembrane region" description="Helical" evidence="1">
    <location>
        <begin position="149"/>
        <end position="169"/>
    </location>
</feature>
<feature type="transmembrane region" description="Helical" evidence="1">
    <location>
        <begin position="189"/>
        <end position="209"/>
    </location>
</feature>